<evidence type="ECO:0000255" key="1">
    <source>
        <dbReference type="HAMAP-Rule" id="MF_00136"/>
    </source>
</evidence>
<dbReference type="EC" id="2.5.1.6" evidence="1"/>
<dbReference type="EMBL" id="CP000780">
    <property type="protein sequence ID" value="ABS55582.1"/>
    <property type="molecule type" value="Genomic_DNA"/>
</dbReference>
<dbReference type="RefSeq" id="WP_012106609.1">
    <property type="nucleotide sequence ID" value="NC_009712.1"/>
</dbReference>
<dbReference type="SMR" id="A7I771"/>
<dbReference type="STRING" id="456442.Mboo_1064"/>
<dbReference type="GeneID" id="5410900"/>
<dbReference type="KEGG" id="mbn:Mboo_1064"/>
<dbReference type="eggNOG" id="arCOG01678">
    <property type="taxonomic scope" value="Archaea"/>
</dbReference>
<dbReference type="HOGENOM" id="CLU_057642_0_0_2"/>
<dbReference type="OrthoDB" id="204488at2157"/>
<dbReference type="UniPathway" id="UPA00315">
    <property type="reaction ID" value="UER00080"/>
</dbReference>
<dbReference type="Proteomes" id="UP000002408">
    <property type="component" value="Chromosome"/>
</dbReference>
<dbReference type="GO" id="GO:0005524">
    <property type="term" value="F:ATP binding"/>
    <property type="evidence" value="ECO:0007669"/>
    <property type="project" value="UniProtKB-UniRule"/>
</dbReference>
<dbReference type="GO" id="GO:0000287">
    <property type="term" value="F:magnesium ion binding"/>
    <property type="evidence" value="ECO:0007669"/>
    <property type="project" value="UniProtKB-UniRule"/>
</dbReference>
<dbReference type="GO" id="GO:0004478">
    <property type="term" value="F:methionine adenosyltransferase activity"/>
    <property type="evidence" value="ECO:0007669"/>
    <property type="project" value="UniProtKB-UniRule"/>
</dbReference>
<dbReference type="GO" id="GO:0006730">
    <property type="term" value="P:one-carbon metabolic process"/>
    <property type="evidence" value="ECO:0007669"/>
    <property type="project" value="UniProtKB-KW"/>
</dbReference>
<dbReference type="GO" id="GO:0006556">
    <property type="term" value="P:S-adenosylmethionine biosynthetic process"/>
    <property type="evidence" value="ECO:0007669"/>
    <property type="project" value="UniProtKB-UniRule"/>
</dbReference>
<dbReference type="Gene3D" id="3.30.300.10">
    <property type="match status" value="1"/>
</dbReference>
<dbReference type="Gene3D" id="3.30.300.280">
    <property type="entry name" value="S-adenosylmethionine synthetase, C-terminal domain"/>
    <property type="match status" value="1"/>
</dbReference>
<dbReference type="HAMAP" id="MF_00136">
    <property type="entry name" value="S_AdoMet_synth2"/>
    <property type="match status" value="1"/>
</dbReference>
<dbReference type="InterPro" id="IPR027790">
    <property type="entry name" value="AdoMet_synthase_2_family"/>
</dbReference>
<dbReference type="InterPro" id="IPR042544">
    <property type="entry name" value="AdoMet_synthase_3"/>
</dbReference>
<dbReference type="InterPro" id="IPR002795">
    <property type="entry name" value="S-AdoMet_synthetase_arc"/>
</dbReference>
<dbReference type="NCBIfam" id="NF003364">
    <property type="entry name" value="PRK04439.1-3"/>
    <property type="match status" value="1"/>
</dbReference>
<dbReference type="NCBIfam" id="NF003366">
    <property type="entry name" value="PRK04439.1-5"/>
    <property type="match status" value="1"/>
</dbReference>
<dbReference type="PANTHER" id="PTHR36697">
    <property type="entry name" value="S-ADENOSYLMETHIONINE SYNTHASE"/>
    <property type="match status" value="1"/>
</dbReference>
<dbReference type="PANTHER" id="PTHR36697:SF1">
    <property type="entry name" value="S-ADENOSYLMETHIONINE SYNTHASE"/>
    <property type="match status" value="1"/>
</dbReference>
<dbReference type="Pfam" id="PF01941">
    <property type="entry name" value="AdoMet_Synthase"/>
    <property type="match status" value="1"/>
</dbReference>
<proteinExistence type="inferred from homology"/>
<reference key="1">
    <citation type="journal article" date="2015" name="Microbiology">
        <title>Genome of Methanoregula boonei 6A8 reveals adaptations to oligotrophic peatland environments.</title>
        <authorList>
            <person name="Braeuer S."/>
            <person name="Cadillo-Quiroz H."/>
            <person name="Kyrpides N."/>
            <person name="Woyke T."/>
            <person name="Goodwin L."/>
            <person name="Detter C."/>
            <person name="Podell S."/>
            <person name="Yavitt J.B."/>
            <person name="Zinder S.H."/>
        </authorList>
    </citation>
    <scope>NUCLEOTIDE SEQUENCE [LARGE SCALE GENOMIC DNA]</scope>
    <source>
        <strain>DSM 21154 / JCM 14090 / 6A8</strain>
    </source>
</reference>
<organism>
    <name type="scientific">Methanoregula boonei (strain DSM 21154 / JCM 14090 / 6A8)</name>
    <dbReference type="NCBI Taxonomy" id="456442"/>
    <lineage>
        <taxon>Archaea</taxon>
        <taxon>Methanobacteriati</taxon>
        <taxon>Methanobacteriota</taxon>
        <taxon>Stenosarchaea group</taxon>
        <taxon>Methanomicrobia</taxon>
        <taxon>Methanomicrobiales</taxon>
        <taxon>Methanoregulaceae</taxon>
        <taxon>Methanoregula</taxon>
    </lineage>
</organism>
<gene>
    <name evidence="1" type="primary">mat</name>
    <name type="ordered locus">Mboo_1064</name>
</gene>
<accession>A7I771</accession>
<sequence>MKRNIQIEALNQIPLEKQRIELVERKCLGHPDSIADGIAESISQALCREYLKEFGAVLHHNTDQGEVVAGESCPKFGGGKMIRPIYVLIDGRATKQFNGVTIPTDTVAVEAAHEYLHKILPELNLQRDVMIDSRLGTGSTDLRDVFKPRQGKVPRSNDTSFGVGHAPFSDVETIIRNTSEYIDTKLRKKYPAIGQDIKIMGLRDGNTITLTVACAIVDRYCADIREYQEYMGLLTEEIGKVAKKSTKRKVVVNLNTADDIKSKSVFLTVTGTSAEMGDDGSVGRGNRCNGLITPNRPMSMEATSGKNPINHIGKIYNLLSTQIAQESIKKVDGIEEMYVRLLSQIGKPIDQPLVASVQVLPRKGVTLQEINGEIQAIVDDNLANVTSITEKVIRGELKTF</sequence>
<protein>
    <recommendedName>
        <fullName evidence="1">S-adenosylmethionine synthase</fullName>
        <shortName evidence="1">AdoMet synthase</shortName>
        <ecNumber evidence="1">2.5.1.6</ecNumber>
    </recommendedName>
    <alternativeName>
        <fullName evidence="1">Methionine adenosyltransferase</fullName>
    </alternativeName>
</protein>
<name>METK_METB6</name>
<comment type="function">
    <text evidence="1">Catalyzes the formation of S-adenosylmethionine from methionine and ATP.</text>
</comment>
<comment type="catalytic activity">
    <reaction evidence="1">
        <text>L-methionine + ATP + H2O = S-adenosyl-L-methionine + phosphate + diphosphate</text>
        <dbReference type="Rhea" id="RHEA:21080"/>
        <dbReference type="ChEBI" id="CHEBI:15377"/>
        <dbReference type="ChEBI" id="CHEBI:30616"/>
        <dbReference type="ChEBI" id="CHEBI:33019"/>
        <dbReference type="ChEBI" id="CHEBI:43474"/>
        <dbReference type="ChEBI" id="CHEBI:57844"/>
        <dbReference type="ChEBI" id="CHEBI:59789"/>
        <dbReference type="EC" id="2.5.1.6"/>
    </reaction>
</comment>
<comment type="cofactor">
    <cofactor evidence="1">
        <name>Mg(2+)</name>
        <dbReference type="ChEBI" id="CHEBI:18420"/>
    </cofactor>
</comment>
<comment type="pathway">
    <text evidence="1">Amino-acid biosynthesis; S-adenosyl-L-methionine biosynthesis; S-adenosyl-L-methionine from L-methionine: step 1/1.</text>
</comment>
<comment type="similarity">
    <text evidence="1">Belongs to the AdoMet synthase 2 family.</text>
</comment>
<feature type="chain" id="PRO_1000196740" description="S-adenosylmethionine synthase">
    <location>
        <begin position="1"/>
        <end position="400"/>
    </location>
</feature>
<feature type="binding site" evidence="1">
    <location>
        <begin position="136"/>
        <end position="141"/>
    </location>
    <ligand>
        <name>ATP</name>
        <dbReference type="ChEBI" id="CHEBI:30616"/>
    </ligand>
</feature>
<keyword id="KW-0067">ATP-binding</keyword>
<keyword id="KW-0460">Magnesium</keyword>
<keyword id="KW-0547">Nucleotide-binding</keyword>
<keyword id="KW-0554">One-carbon metabolism</keyword>
<keyword id="KW-1185">Reference proteome</keyword>
<keyword id="KW-0808">Transferase</keyword>